<accession>B5XML0</accession>
<sequence>MFLTLIAAIISFMVSAFTMPYFIKFYQLKKIGGQQMHEDVKQHLAKAGTPTMGGTVFLLVATAVSLLVSLFSIKNTQSLALISGILSIVVIYGIIGFLDDFLKIFKQINEGLTAKQKLALQLAGGLMFYFLHVSPSGISSINVFGYQLPLGIFYLFFVLFWVVGFSNAVNLTDGIDGLASISVVISLVTYGVIAYVQSQFDVLLLIGAMIGALLGFFCFNHKPAKVFMGDVGSLALGAMLAAISIALRQEWTLLIIGIVYVLETSSVMLQVSYFKYTKKKYGEGRRIFRMTPFHHHLELGGLSGKGKKWSEWQVDAFLWGVGSLASLLVLAILYVF</sequence>
<keyword id="KW-0131">Cell cycle</keyword>
<keyword id="KW-0132">Cell division</keyword>
<keyword id="KW-1003">Cell membrane</keyword>
<keyword id="KW-0133">Cell shape</keyword>
<keyword id="KW-0961">Cell wall biogenesis/degradation</keyword>
<keyword id="KW-0460">Magnesium</keyword>
<keyword id="KW-0472">Membrane</keyword>
<keyword id="KW-0479">Metal-binding</keyword>
<keyword id="KW-0573">Peptidoglycan synthesis</keyword>
<keyword id="KW-0808">Transferase</keyword>
<keyword id="KW-0812">Transmembrane</keyword>
<keyword id="KW-1133">Transmembrane helix</keyword>
<name>MRAY_STRPZ</name>
<feature type="chain" id="PRO_1000090679" description="Phospho-N-acetylmuramoyl-pentapeptide-transferase">
    <location>
        <begin position="1"/>
        <end position="336"/>
    </location>
</feature>
<feature type="transmembrane region" description="Helical" evidence="1">
    <location>
        <begin position="3"/>
        <end position="23"/>
    </location>
</feature>
<feature type="transmembrane region" description="Helical" evidence="1">
    <location>
        <begin position="53"/>
        <end position="73"/>
    </location>
</feature>
<feature type="transmembrane region" description="Helical" evidence="1">
    <location>
        <begin position="78"/>
        <end position="98"/>
    </location>
</feature>
<feature type="transmembrane region" description="Helical" evidence="1">
    <location>
        <begin position="118"/>
        <end position="138"/>
    </location>
</feature>
<feature type="transmembrane region" description="Helical" evidence="1">
    <location>
        <begin position="143"/>
        <end position="163"/>
    </location>
</feature>
<feature type="transmembrane region" description="Helical" evidence="1">
    <location>
        <begin position="174"/>
        <end position="194"/>
    </location>
</feature>
<feature type="transmembrane region" description="Helical" evidence="1">
    <location>
        <begin position="200"/>
        <end position="220"/>
    </location>
</feature>
<feature type="transmembrane region" description="Helical" evidence="1">
    <location>
        <begin position="226"/>
        <end position="246"/>
    </location>
</feature>
<feature type="transmembrane region" description="Helical" evidence="1">
    <location>
        <begin position="251"/>
        <end position="271"/>
    </location>
</feature>
<feature type="transmembrane region" description="Helical" evidence="1">
    <location>
        <begin position="316"/>
        <end position="336"/>
    </location>
</feature>
<reference key="1">
    <citation type="journal article" date="2008" name="J. Bacteriol.">
        <title>Genome sequence of a nephritogenic and highly transformable M49 strain of Streptococcus pyogenes.</title>
        <authorList>
            <person name="McShan W.M."/>
            <person name="Ferretti J.J."/>
            <person name="Karasawa T."/>
            <person name="Suvorov A.N."/>
            <person name="Lin S."/>
            <person name="Qin B."/>
            <person name="Jia H."/>
            <person name="Kenton S."/>
            <person name="Najar F."/>
            <person name="Wu H."/>
            <person name="Scott J."/>
            <person name="Roe B.A."/>
            <person name="Savic D.J."/>
        </authorList>
    </citation>
    <scope>NUCLEOTIDE SEQUENCE [LARGE SCALE GENOMIC DNA]</scope>
    <source>
        <strain>NZ131</strain>
    </source>
</reference>
<comment type="function">
    <text evidence="1">Catalyzes the initial step of the lipid cycle reactions in the biosynthesis of the cell wall peptidoglycan: transfers peptidoglycan precursor phospho-MurNAc-pentapeptide from UDP-MurNAc-pentapeptide onto the lipid carrier undecaprenyl phosphate, yielding undecaprenyl-pyrophosphoryl-MurNAc-pentapeptide, known as lipid I.</text>
</comment>
<comment type="catalytic activity">
    <reaction evidence="1">
        <text>UDP-N-acetyl-alpha-D-muramoyl-L-alanyl-gamma-D-glutamyl-L-lysyl-D-alanyl-D-alanine + di-trans,octa-cis-undecaprenyl phosphate = Mur2Ac(oyl-L-Ala-gamma-D-Glu-L-Lys-D-Ala-D-Ala)-di-trans,octa-cis-undecaprenyl diphosphate + UMP</text>
        <dbReference type="Rhea" id="RHEA:21920"/>
        <dbReference type="ChEBI" id="CHEBI:57865"/>
        <dbReference type="ChEBI" id="CHEBI:60032"/>
        <dbReference type="ChEBI" id="CHEBI:60392"/>
        <dbReference type="ChEBI" id="CHEBI:70758"/>
        <dbReference type="EC" id="2.7.8.13"/>
    </reaction>
</comment>
<comment type="cofactor">
    <cofactor evidence="1">
        <name>Mg(2+)</name>
        <dbReference type="ChEBI" id="CHEBI:18420"/>
    </cofactor>
</comment>
<comment type="pathway">
    <text evidence="1">Cell wall biogenesis; peptidoglycan biosynthesis.</text>
</comment>
<comment type="subcellular location">
    <subcellularLocation>
        <location evidence="1">Cell membrane</location>
        <topology evidence="1">Multi-pass membrane protein</topology>
    </subcellularLocation>
</comment>
<comment type="similarity">
    <text evidence="1">Belongs to the glycosyltransferase 4 family. MraY subfamily.</text>
</comment>
<organism>
    <name type="scientific">Streptococcus pyogenes serotype M49 (strain NZ131)</name>
    <dbReference type="NCBI Taxonomy" id="471876"/>
    <lineage>
        <taxon>Bacteria</taxon>
        <taxon>Bacillati</taxon>
        <taxon>Bacillota</taxon>
        <taxon>Bacilli</taxon>
        <taxon>Lactobacillales</taxon>
        <taxon>Streptococcaceae</taxon>
        <taxon>Streptococcus</taxon>
    </lineage>
</organism>
<dbReference type="EC" id="2.7.8.13" evidence="1"/>
<dbReference type="EMBL" id="CP000829">
    <property type="protein sequence ID" value="ACI61572.1"/>
    <property type="molecule type" value="Genomic_DNA"/>
</dbReference>
<dbReference type="SMR" id="B5XML0"/>
<dbReference type="KEGG" id="soz:Spy49_1290c"/>
<dbReference type="HOGENOM" id="CLU_023982_0_1_9"/>
<dbReference type="UniPathway" id="UPA00219"/>
<dbReference type="Proteomes" id="UP000001039">
    <property type="component" value="Chromosome"/>
</dbReference>
<dbReference type="GO" id="GO:0005886">
    <property type="term" value="C:plasma membrane"/>
    <property type="evidence" value="ECO:0007669"/>
    <property type="project" value="UniProtKB-SubCell"/>
</dbReference>
<dbReference type="GO" id="GO:0046872">
    <property type="term" value="F:metal ion binding"/>
    <property type="evidence" value="ECO:0007669"/>
    <property type="project" value="UniProtKB-KW"/>
</dbReference>
<dbReference type="GO" id="GO:0008963">
    <property type="term" value="F:phospho-N-acetylmuramoyl-pentapeptide-transferase activity"/>
    <property type="evidence" value="ECO:0007669"/>
    <property type="project" value="UniProtKB-UniRule"/>
</dbReference>
<dbReference type="GO" id="GO:0051301">
    <property type="term" value="P:cell division"/>
    <property type="evidence" value="ECO:0007669"/>
    <property type="project" value="UniProtKB-KW"/>
</dbReference>
<dbReference type="GO" id="GO:0071555">
    <property type="term" value="P:cell wall organization"/>
    <property type="evidence" value="ECO:0007669"/>
    <property type="project" value="UniProtKB-KW"/>
</dbReference>
<dbReference type="GO" id="GO:0009252">
    <property type="term" value="P:peptidoglycan biosynthetic process"/>
    <property type="evidence" value="ECO:0007669"/>
    <property type="project" value="UniProtKB-UniRule"/>
</dbReference>
<dbReference type="GO" id="GO:0008360">
    <property type="term" value="P:regulation of cell shape"/>
    <property type="evidence" value="ECO:0007669"/>
    <property type="project" value="UniProtKB-KW"/>
</dbReference>
<dbReference type="CDD" id="cd06852">
    <property type="entry name" value="GT_MraY"/>
    <property type="match status" value="1"/>
</dbReference>
<dbReference type="HAMAP" id="MF_00038">
    <property type="entry name" value="MraY"/>
    <property type="match status" value="1"/>
</dbReference>
<dbReference type="InterPro" id="IPR000715">
    <property type="entry name" value="Glycosyl_transferase_4"/>
</dbReference>
<dbReference type="InterPro" id="IPR003524">
    <property type="entry name" value="PNAcMuramoyl-5peptid_Trfase"/>
</dbReference>
<dbReference type="InterPro" id="IPR018480">
    <property type="entry name" value="PNAcMuramoyl-5peptid_Trfase_CS"/>
</dbReference>
<dbReference type="NCBIfam" id="TIGR00445">
    <property type="entry name" value="mraY"/>
    <property type="match status" value="1"/>
</dbReference>
<dbReference type="PANTHER" id="PTHR22926">
    <property type="entry name" value="PHOSPHO-N-ACETYLMURAMOYL-PENTAPEPTIDE-TRANSFERASE"/>
    <property type="match status" value="1"/>
</dbReference>
<dbReference type="PANTHER" id="PTHR22926:SF5">
    <property type="entry name" value="PHOSPHO-N-ACETYLMURAMOYL-PENTAPEPTIDE-TRANSFERASE HOMOLOG"/>
    <property type="match status" value="1"/>
</dbReference>
<dbReference type="Pfam" id="PF00953">
    <property type="entry name" value="Glycos_transf_4"/>
    <property type="match status" value="1"/>
</dbReference>
<dbReference type="Pfam" id="PF10555">
    <property type="entry name" value="MraY_sig1"/>
    <property type="match status" value="1"/>
</dbReference>
<dbReference type="PROSITE" id="PS01348">
    <property type="entry name" value="MRAY_2"/>
    <property type="match status" value="1"/>
</dbReference>
<proteinExistence type="inferred from homology"/>
<evidence type="ECO:0000255" key="1">
    <source>
        <dbReference type="HAMAP-Rule" id="MF_00038"/>
    </source>
</evidence>
<protein>
    <recommendedName>
        <fullName evidence="1">Phospho-N-acetylmuramoyl-pentapeptide-transferase</fullName>
        <ecNumber evidence="1">2.7.8.13</ecNumber>
    </recommendedName>
    <alternativeName>
        <fullName evidence="1">UDP-MurNAc-pentapeptide phosphotransferase</fullName>
    </alternativeName>
</protein>
<gene>
    <name evidence="1" type="primary">mraY</name>
    <name type="ordered locus">Spy49_1290c</name>
</gene>